<organism>
    <name type="scientific">Oryza sativa subsp. japonica</name>
    <name type="common">Rice</name>
    <dbReference type="NCBI Taxonomy" id="39947"/>
    <lineage>
        <taxon>Eukaryota</taxon>
        <taxon>Viridiplantae</taxon>
        <taxon>Streptophyta</taxon>
        <taxon>Embryophyta</taxon>
        <taxon>Tracheophyta</taxon>
        <taxon>Spermatophyta</taxon>
        <taxon>Magnoliopsida</taxon>
        <taxon>Liliopsida</taxon>
        <taxon>Poales</taxon>
        <taxon>Poaceae</taxon>
        <taxon>BOP clade</taxon>
        <taxon>Oryzoideae</taxon>
        <taxon>Oryzeae</taxon>
        <taxon>Oryzinae</taxon>
        <taxon>Oryza</taxon>
        <taxon>Oryza sativa</taxon>
    </lineage>
</organism>
<accession>Q5JN07</accession>
<accession>A0A0P0V8L1</accession>
<dbReference type="EMBL" id="AP003239">
    <property type="protein sequence ID" value="BAD87150.1"/>
    <property type="status" value="ALT_SEQ"/>
    <property type="molecule type" value="Genomic_DNA"/>
</dbReference>
<dbReference type="EMBL" id="AP014957">
    <property type="protein sequence ID" value="BAS74504.1"/>
    <property type="molecule type" value="Genomic_DNA"/>
</dbReference>
<dbReference type="SMR" id="Q5JN07"/>
<dbReference type="STRING" id="39947.Q5JN07"/>
<dbReference type="PaxDb" id="39947-Q5JN07"/>
<dbReference type="EnsemblPlants" id="Os01t0765900-00">
    <property type="protein sequence ID" value="Os01t0765900-00"/>
    <property type="gene ID" value="Os01g0765900"/>
</dbReference>
<dbReference type="Gramene" id="Os01t0765900-00">
    <property type="protein sequence ID" value="Os01t0765900-00"/>
    <property type="gene ID" value="Os01g0765900"/>
</dbReference>
<dbReference type="eggNOG" id="KOG3173">
    <property type="taxonomic scope" value="Eukaryota"/>
</dbReference>
<dbReference type="HOGENOM" id="CLU_781639_0_0_1"/>
<dbReference type="InParanoid" id="Q5JN07"/>
<dbReference type="OMA" id="HKSRINV"/>
<dbReference type="Proteomes" id="UP000000763">
    <property type="component" value="Chromosome 1"/>
</dbReference>
<dbReference type="Proteomes" id="UP000059680">
    <property type="component" value="Chromosome 1"/>
</dbReference>
<dbReference type="GO" id="GO:0003677">
    <property type="term" value="F:DNA binding"/>
    <property type="evidence" value="ECO:0007669"/>
    <property type="project" value="InterPro"/>
</dbReference>
<dbReference type="GO" id="GO:0008270">
    <property type="term" value="F:zinc ion binding"/>
    <property type="evidence" value="ECO:0007669"/>
    <property type="project" value="UniProtKB-KW"/>
</dbReference>
<dbReference type="FunFam" id="4.10.1110.10:FF:000001">
    <property type="entry name" value="Zinc finger AN1-type containing 6"/>
    <property type="match status" value="1"/>
</dbReference>
<dbReference type="Gene3D" id="1.20.5.4770">
    <property type="match status" value="1"/>
</dbReference>
<dbReference type="Gene3D" id="4.10.1110.10">
    <property type="entry name" value="AN1-like Zinc finger"/>
    <property type="match status" value="1"/>
</dbReference>
<dbReference type="InterPro" id="IPR035896">
    <property type="entry name" value="AN1-like_Znf"/>
</dbReference>
<dbReference type="InterPro" id="IPR050652">
    <property type="entry name" value="AN1_A20_ZnFinger"/>
</dbReference>
<dbReference type="InterPro" id="IPR002653">
    <property type="entry name" value="Znf_A20"/>
</dbReference>
<dbReference type="InterPro" id="IPR000058">
    <property type="entry name" value="Znf_AN1"/>
</dbReference>
<dbReference type="PANTHER" id="PTHR10634">
    <property type="entry name" value="AN1-TYPE ZINC FINGER PROTEIN"/>
    <property type="match status" value="1"/>
</dbReference>
<dbReference type="PANTHER" id="PTHR10634:SF67">
    <property type="entry name" value="AN1-TYPE ZINC FINGER PROTEIN 3"/>
    <property type="match status" value="1"/>
</dbReference>
<dbReference type="Pfam" id="PF01754">
    <property type="entry name" value="zf-A20"/>
    <property type="match status" value="1"/>
</dbReference>
<dbReference type="Pfam" id="PF01428">
    <property type="entry name" value="zf-AN1"/>
    <property type="match status" value="1"/>
</dbReference>
<dbReference type="SMART" id="SM00259">
    <property type="entry name" value="ZnF_A20"/>
    <property type="match status" value="1"/>
</dbReference>
<dbReference type="SMART" id="SM00154">
    <property type="entry name" value="ZnF_AN1"/>
    <property type="match status" value="1"/>
</dbReference>
<dbReference type="SUPFAM" id="SSF118310">
    <property type="entry name" value="AN1-like Zinc finger"/>
    <property type="match status" value="1"/>
</dbReference>
<dbReference type="SUPFAM" id="SSF57716">
    <property type="entry name" value="Glucocorticoid receptor-like (DNA-binding domain)"/>
    <property type="match status" value="1"/>
</dbReference>
<dbReference type="PROSITE" id="PS51036">
    <property type="entry name" value="ZF_A20"/>
    <property type="match status" value="1"/>
</dbReference>
<dbReference type="PROSITE" id="PS51039">
    <property type="entry name" value="ZF_AN1"/>
    <property type="match status" value="1"/>
</dbReference>
<reference key="1">
    <citation type="journal article" date="2002" name="Nature">
        <title>The genome sequence and structure of rice chromosome 1.</title>
        <authorList>
            <person name="Sasaki T."/>
            <person name="Matsumoto T."/>
            <person name="Yamamoto K."/>
            <person name="Sakata K."/>
            <person name="Baba T."/>
            <person name="Katayose Y."/>
            <person name="Wu J."/>
            <person name="Niimura Y."/>
            <person name="Cheng Z."/>
            <person name="Nagamura Y."/>
            <person name="Antonio B.A."/>
            <person name="Kanamori H."/>
            <person name="Hosokawa S."/>
            <person name="Masukawa M."/>
            <person name="Arikawa K."/>
            <person name="Chiden Y."/>
            <person name="Hayashi M."/>
            <person name="Okamoto M."/>
            <person name="Ando T."/>
            <person name="Aoki H."/>
            <person name="Arita K."/>
            <person name="Hamada M."/>
            <person name="Harada C."/>
            <person name="Hijishita S."/>
            <person name="Honda M."/>
            <person name="Ichikawa Y."/>
            <person name="Idonuma A."/>
            <person name="Iijima M."/>
            <person name="Ikeda M."/>
            <person name="Ikeno M."/>
            <person name="Ito S."/>
            <person name="Ito T."/>
            <person name="Ito Y."/>
            <person name="Ito Y."/>
            <person name="Iwabuchi A."/>
            <person name="Kamiya K."/>
            <person name="Karasawa W."/>
            <person name="Katagiri S."/>
            <person name="Kikuta A."/>
            <person name="Kobayashi N."/>
            <person name="Kono I."/>
            <person name="Machita K."/>
            <person name="Maehara T."/>
            <person name="Mizuno H."/>
            <person name="Mizubayashi T."/>
            <person name="Mukai Y."/>
            <person name="Nagasaki H."/>
            <person name="Nakashima M."/>
            <person name="Nakama Y."/>
            <person name="Nakamichi Y."/>
            <person name="Nakamura M."/>
            <person name="Namiki N."/>
            <person name="Negishi M."/>
            <person name="Ohta I."/>
            <person name="Ono N."/>
            <person name="Saji S."/>
            <person name="Sakai K."/>
            <person name="Shibata M."/>
            <person name="Shimokawa T."/>
            <person name="Shomura A."/>
            <person name="Song J."/>
            <person name="Takazaki Y."/>
            <person name="Terasawa K."/>
            <person name="Tsuji K."/>
            <person name="Waki K."/>
            <person name="Yamagata H."/>
            <person name="Yamane H."/>
            <person name="Yoshiki S."/>
            <person name="Yoshihara R."/>
            <person name="Yukawa K."/>
            <person name="Zhong H."/>
            <person name="Iwama H."/>
            <person name="Endo T."/>
            <person name="Ito H."/>
            <person name="Hahn J.H."/>
            <person name="Kim H.-I."/>
            <person name="Eun M.-Y."/>
            <person name="Yano M."/>
            <person name="Jiang J."/>
            <person name="Gojobori T."/>
        </authorList>
    </citation>
    <scope>NUCLEOTIDE SEQUENCE [LARGE SCALE GENOMIC DNA]</scope>
    <source>
        <strain>cv. Nipponbare</strain>
    </source>
</reference>
<reference key="2">
    <citation type="journal article" date="2005" name="Nature">
        <title>The map-based sequence of the rice genome.</title>
        <authorList>
            <consortium name="International rice genome sequencing project (IRGSP)"/>
        </authorList>
    </citation>
    <scope>NUCLEOTIDE SEQUENCE [LARGE SCALE GENOMIC DNA]</scope>
    <source>
        <strain>cv. Nipponbare</strain>
    </source>
</reference>
<reference key="3">
    <citation type="journal article" date="2013" name="Rice">
        <title>Improvement of the Oryza sativa Nipponbare reference genome using next generation sequence and optical map data.</title>
        <authorList>
            <person name="Kawahara Y."/>
            <person name="de la Bastide M."/>
            <person name="Hamilton J.P."/>
            <person name="Kanamori H."/>
            <person name="McCombie W.R."/>
            <person name="Ouyang S."/>
            <person name="Schwartz D.C."/>
            <person name="Tanaka T."/>
            <person name="Wu J."/>
            <person name="Zhou S."/>
            <person name="Childs K.L."/>
            <person name="Davidson R.M."/>
            <person name="Lin H."/>
            <person name="Quesada-Ocampo L."/>
            <person name="Vaillancourt B."/>
            <person name="Sakai H."/>
            <person name="Lee S.S."/>
            <person name="Kim J."/>
            <person name="Numa H."/>
            <person name="Itoh T."/>
            <person name="Buell C.R."/>
            <person name="Matsumoto T."/>
        </authorList>
    </citation>
    <scope>GENOME REANNOTATION</scope>
    <source>
        <strain>cv. Nipponbare</strain>
    </source>
</reference>
<reference key="4">
    <citation type="journal article" date="2006" name="Mol. Genet. Genomics">
        <title>Genome-wide analysis of the stress associated protein (SAP) gene family containing A20/AN1 zinc-finger(s) in rice and their phylogenetic relationship with Arabidopsis.</title>
        <authorList>
            <person name="Vij S."/>
            <person name="Tyagi A.K."/>
        </authorList>
    </citation>
    <scope>GENE FAMILY</scope>
    <scope>INDUCTION</scope>
</reference>
<feature type="chain" id="PRO_0000269866" description="Zinc finger A20 and AN1 domain-containing stress-associated protein 3">
    <location>
        <begin position="1"/>
        <end position="355"/>
    </location>
</feature>
<feature type="zinc finger region" description="A20-type" evidence="3">
    <location>
        <begin position="199"/>
        <end position="233"/>
    </location>
</feature>
<feature type="zinc finger region" description="AN1-type" evidence="2">
    <location>
        <begin position="289"/>
        <end position="335"/>
    </location>
</feature>
<feature type="binding site" evidence="3">
    <location>
        <position position="205"/>
    </location>
    <ligand>
        <name>Zn(2+)</name>
        <dbReference type="ChEBI" id="CHEBI:29105"/>
        <label>1</label>
    </ligand>
</feature>
<feature type="binding site" evidence="3">
    <location>
        <position position="209"/>
    </location>
    <ligand>
        <name>Zn(2+)</name>
        <dbReference type="ChEBI" id="CHEBI:29105"/>
        <label>1</label>
    </ligand>
</feature>
<feature type="binding site" evidence="3">
    <location>
        <position position="221"/>
    </location>
    <ligand>
        <name>Zn(2+)</name>
        <dbReference type="ChEBI" id="CHEBI:29105"/>
        <label>1</label>
    </ligand>
</feature>
<feature type="binding site" evidence="3">
    <location>
        <position position="224"/>
    </location>
    <ligand>
        <name>Zn(2+)</name>
        <dbReference type="ChEBI" id="CHEBI:29105"/>
        <label>1</label>
    </ligand>
</feature>
<feature type="binding site" evidence="2">
    <location>
        <position position="295"/>
    </location>
    <ligand>
        <name>Zn(2+)</name>
        <dbReference type="ChEBI" id="CHEBI:29105"/>
        <label>2</label>
    </ligand>
</feature>
<feature type="binding site" evidence="2">
    <location>
        <position position="298"/>
    </location>
    <ligand>
        <name>Zn(2+)</name>
        <dbReference type="ChEBI" id="CHEBI:29105"/>
        <label>2</label>
    </ligand>
</feature>
<feature type="binding site" evidence="2">
    <location>
        <position position="309"/>
    </location>
    <ligand>
        <name>Zn(2+)</name>
        <dbReference type="ChEBI" id="CHEBI:29105"/>
        <label>3</label>
    </ligand>
</feature>
<feature type="binding site" evidence="2">
    <location>
        <position position="311"/>
    </location>
    <ligand>
        <name>Zn(2+)</name>
        <dbReference type="ChEBI" id="CHEBI:29105"/>
        <label>3</label>
    </ligand>
</feature>
<feature type="binding site" evidence="2">
    <location>
        <position position="316"/>
    </location>
    <ligand>
        <name>Zn(2+)</name>
        <dbReference type="ChEBI" id="CHEBI:29105"/>
        <label>2</label>
    </ligand>
</feature>
<feature type="binding site" evidence="2">
    <location>
        <position position="319"/>
    </location>
    <ligand>
        <name>Zn(2+)</name>
        <dbReference type="ChEBI" id="CHEBI:29105"/>
        <label>2</label>
    </ligand>
</feature>
<feature type="binding site" evidence="2">
    <location>
        <position position="325"/>
    </location>
    <ligand>
        <name>Zn(2+)</name>
        <dbReference type="ChEBI" id="CHEBI:29105"/>
        <label>3</label>
    </ligand>
</feature>
<feature type="binding site" evidence="2">
    <location>
        <position position="327"/>
    </location>
    <ligand>
        <name>Zn(2+)</name>
        <dbReference type="ChEBI" id="CHEBI:29105"/>
        <label>3</label>
    </ligand>
</feature>
<sequence>MGQQVQHESRINVGEATHVSKAEMGANTMFATSRLNSNNKVGPELAYLSGVASSASDSSTAAPSPCYLCHKPAALHVFGLAGRYVFGSVKREAYLSQEGPRSGRTPNRIAESLPVRVVNDFGLRLRVVTNQGPIKPRPPRPIDAIVFASIETRNRLRGFDRSFCCSAPPETYVFLPRARETIVLRANIIKMSSEQQASAGQPVLCASGCGFYGNPATLDMCSVCYRQHCLLNGATMATGPSSSVAAASAATVATGAVTSDSCSVPSAEVNGAAFSSKNNPEPATVVEKKAPANRCASCKKKVGLLGFACRCGATYCGTHRYPEKHACGFDFKGASRDAIARANPLIKGEKLTNKI</sequence>
<gene>
    <name type="primary">SAP3</name>
    <name type="ordered locus">Os01g0765900</name>
    <name type="ordered locus">LOC_Os01g56040</name>
    <name type="ORF">P0403C05.31</name>
</gene>
<protein>
    <recommendedName>
        <fullName>Zinc finger A20 and AN1 domain-containing stress-associated protein 3</fullName>
        <shortName>OsSAP3</shortName>
    </recommendedName>
</protein>
<keyword id="KW-0479">Metal-binding</keyword>
<keyword id="KW-1185">Reference proteome</keyword>
<keyword id="KW-0346">Stress response</keyword>
<keyword id="KW-0862">Zinc</keyword>
<keyword id="KW-0863">Zinc-finger</keyword>
<name>SAP3_ORYSJ</name>
<proteinExistence type="evidence at transcript level"/>
<comment type="function">
    <text evidence="1">May be involved in environmental stress response.</text>
</comment>
<comment type="induction">
    <text evidence="4">By cold, dehydration and salt stress.</text>
</comment>
<comment type="sequence caution" evidence="5">
    <conflict type="erroneous gene model prediction">
        <sequence resource="EMBL-CDS" id="BAD87150"/>
    </conflict>
</comment>
<evidence type="ECO:0000250" key="1"/>
<evidence type="ECO:0000255" key="2">
    <source>
        <dbReference type="PROSITE-ProRule" id="PRU00449"/>
    </source>
</evidence>
<evidence type="ECO:0000255" key="3">
    <source>
        <dbReference type="PROSITE-ProRule" id="PRU00451"/>
    </source>
</evidence>
<evidence type="ECO:0000269" key="4">
    <source>
    </source>
</evidence>
<evidence type="ECO:0000305" key="5"/>